<organism>
    <name type="scientific">Petrotoga mobilis (strain DSM 10674 / SJ95)</name>
    <dbReference type="NCBI Taxonomy" id="403833"/>
    <lineage>
        <taxon>Bacteria</taxon>
        <taxon>Thermotogati</taxon>
        <taxon>Thermotogota</taxon>
        <taxon>Thermotogae</taxon>
        <taxon>Petrotogales</taxon>
        <taxon>Petrotogaceae</taxon>
        <taxon>Petrotoga</taxon>
    </lineage>
</organism>
<sequence>MATPKQKASRGQTHSRRAKFYSAYKINVVKCPKCGEPKLPHRVCLNCGYYGDKQILEIGE</sequence>
<keyword id="KW-0687">Ribonucleoprotein</keyword>
<keyword id="KW-0689">Ribosomal protein</keyword>
<name>RL32_PETMO</name>
<comment type="similarity">
    <text evidence="1">Belongs to the bacterial ribosomal protein bL32 family.</text>
</comment>
<dbReference type="EMBL" id="CP000879">
    <property type="protein sequence ID" value="ABX32533.1"/>
    <property type="molecule type" value="Genomic_DNA"/>
</dbReference>
<dbReference type="RefSeq" id="WP_012209630.1">
    <property type="nucleotide sequence ID" value="NC_010003.1"/>
</dbReference>
<dbReference type="SMR" id="A9BGV2"/>
<dbReference type="STRING" id="403833.Pmob_1844"/>
<dbReference type="KEGG" id="pmo:Pmob_1844"/>
<dbReference type="eggNOG" id="COG0333">
    <property type="taxonomic scope" value="Bacteria"/>
</dbReference>
<dbReference type="HOGENOM" id="CLU_129084_1_3_0"/>
<dbReference type="OrthoDB" id="9812874at2"/>
<dbReference type="Proteomes" id="UP000000789">
    <property type="component" value="Chromosome"/>
</dbReference>
<dbReference type="GO" id="GO:0015934">
    <property type="term" value="C:large ribosomal subunit"/>
    <property type="evidence" value="ECO:0007669"/>
    <property type="project" value="InterPro"/>
</dbReference>
<dbReference type="GO" id="GO:0003735">
    <property type="term" value="F:structural constituent of ribosome"/>
    <property type="evidence" value="ECO:0007669"/>
    <property type="project" value="InterPro"/>
</dbReference>
<dbReference type="GO" id="GO:0006412">
    <property type="term" value="P:translation"/>
    <property type="evidence" value="ECO:0007669"/>
    <property type="project" value="UniProtKB-UniRule"/>
</dbReference>
<dbReference type="HAMAP" id="MF_00340">
    <property type="entry name" value="Ribosomal_bL32"/>
    <property type="match status" value="1"/>
</dbReference>
<dbReference type="InterPro" id="IPR002677">
    <property type="entry name" value="Ribosomal_bL32"/>
</dbReference>
<dbReference type="InterPro" id="IPR044957">
    <property type="entry name" value="Ribosomal_bL32_bact"/>
</dbReference>
<dbReference type="InterPro" id="IPR011332">
    <property type="entry name" value="Ribosomal_zn-bd"/>
</dbReference>
<dbReference type="NCBIfam" id="TIGR01031">
    <property type="entry name" value="rpmF_bact"/>
    <property type="match status" value="1"/>
</dbReference>
<dbReference type="PANTHER" id="PTHR35534">
    <property type="entry name" value="50S RIBOSOMAL PROTEIN L32"/>
    <property type="match status" value="1"/>
</dbReference>
<dbReference type="PANTHER" id="PTHR35534:SF1">
    <property type="entry name" value="LARGE RIBOSOMAL SUBUNIT PROTEIN BL32"/>
    <property type="match status" value="1"/>
</dbReference>
<dbReference type="Pfam" id="PF01783">
    <property type="entry name" value="Ribosomal_L32p"/>
    <property type="match status" value="1"/>
</dbReference>
<dbReference type="SUPFAM" id="SSF57829">
    <property type="entry name" value="Zn-binding ribosomal proteins"/>
    <property type="match status" value="1"/>
</dbReference>
<proteinExistence type="inferred from homology"/>
<accession>A9BGV2</accession>
<feature type="chain" id="PRO_1000079336" description="Large ribosomal subunit protein bL32">
    <location>
        <begin position="1"/>
        <end position="60"/>
    </location>
</feature>
<protein>
    <recommendedName>
        <fullName evidence="1">Large ribosomal subunit protein bL32</fullName>
    </recommendedName>
    <alternativeName>
        <fullName evidence="2">50S ribosomal protein L32</fullName>
    </alternativeName>
</protein>
<evidence type="ECO:0000255" key="1">
    <source>
        <dbReference type="HAMAP-Rule" id="MF_00340"/>
    </source>
</evidence>
<evidence type="ECO:0000305" key="2"/>
<gene>
    <name evidence="1" type="primary">rpmF</name>
    <name type="ordered locus">Pmob_1844</name>
</gene>
<reference key="1">
    <citation type="submission" date="2007-11" db="EMBL/GenBank/DDBJ databases">
        <title>Complete sequence of Petroga mobilis SJ95.</title>
        <authorList>
            <consortium name="US DOE Joint Genome Institute"/>
            <person name="Copeland A."/>
            <person name="Lucas S."/>
            <person name="Lapidus A."/>
            <person name="Barry K."/>
            <person name="Glavina del Rio T."/>
            <person name="Dalin E."/>
            <person name="Tice H."/>
            <person name="Pitluck S."/>
            <person name="Meincke L."/>
            <person name="Brettin T."/>
            <person name="Bruce D."/>
            <person name="Detter J.C."/>
            <person name="Han C."/>
            <person name="Kuske C.R."/>
            <person name="Schmutz J."/>
            <person name="Larimer F."/>
            <person name="Land M."/>
            <person name="Hauser L."/>
            <person name="Kyrpides N."/>
            <person name="Mikhailova N."/>
            <person name="Noll K."/>
            <person name="Richardson P."/>
        </authorList>
    </citation>
    <scope>NUCLEOTIDE SEQUENCE [LARGE SCALE GENOMIC DNA]</scope>
    <source>
        <strain>DSM 10674 / SJ95</strain>
    </source>
</reference>